<feature type="chain" id="PRO_0000386882" description="Ribosomal RNA small subunit methyltransferase H">
    <location>
        <begin position="1"/>
        <end position="313"/>
    </location>
</feature>
<feature type="binding site" evidence="1">
    <location>
        <begin position="35"/>
        <end position="37"/>
    </location>
    <ligand>
        <name>S-adenosyl-L-methionine</name>
        <dbReference type="ChEBI" id="CHEBI:59789"/>
    </ligand>
</feature>
<feature type="binding site" evidence="1">
    <location>
        <position position="55"/>
    </location>
    <ligand>
        <name>S-adenosyl-L-methionine</name>
        <dbReference type="ChEBI" id="CHEBI:59789"/>
    </ligand>
</feature>
<feature type="binding site" evidence="1">
    <location>
        <position position="79"/>
    </location>
    <ligand>
        <name>S-adenosyl-L-methionine</name>
        <dbReference type="ChEBI" id="CHEBI:59789"/>
    </ligand>
</feature>
<feature type="binding site" evidence="1">
    <location>
        <position position="101"/>
    </location>
    <ligand>
        <name>S-adenosyl-L-methionine</name>
        <dbReference type="ChEBI" id="CHEBI:59789"/>
    </ligand>
</feature>
<feature type="binding site" evidence="1">
    <location>
        <position position="108"/>
    </location>
    <ligand>
        <name>S-adenosyl-L-methionine</name>
        <dbReference type="ChEBI" id="CHEBI:59789"/>
    </ligand>
</feature>
<evidence type="ECO:0000255" key="1">
    <source>
        <dbReference type="HAMAP-Rule" id="MF_01007"/>
    </source>
</evidence>
<comment type="function">
    <text evidence="1">Specifically methylates the N4 position of cytidine in position 1402 (C1402) of 16S rRNA.</text>
</comment>
<comment type="catalytic activity">
    <reaction evidence="1">
        <text>cytidine(1402) in 16S rRNA + S-adenosyl-L-methionine = N(4)-methylcytidine(1402) in 16S rRNA + S-adenosyl-L-homocysteine + H(+)</text>
        <dbReference type="Rhea" id="RHEA:42928"/>
        <dbReference type="Rhea" id="RHEA-COMP:10286"/>
        <dbReference type="Rhea" id="RHEA-COMP:10287"/>
        <dbReference type="ChEBI" id="CHEBI:15378"/>
        <dbReference type="ChEBI" id="CHEBI:57856"/>
        <dbReference type="ChEBI" id="CHEBI:59789"/>
        <dbReference type="ChEBI" id="CHEBI:74506"/>
        <dbReference type="ChEBI" id="CHEBI:82748"/>
        <dbReference type="EC" id="2.1.1.199"/>
    </reaction>
</comment>
<comment type="subcellular location">
    <subcellularLocation>
        <location evidence="1">Cytoplasm</location>
    </subcellularLocation>
</comment>
<comment type="similarity">
    <text evidence="1">Belongs to the methyltransferase superfamily. RsmH family.</text>
</comment>
<proteinExistence type="inferred from homology"/>
<name>RSMH_ECOL5</name>
<organism>
    <name type="scientific">Escherichia coli O6:K15:H31 (strain 536 / UPEC)</name>
    <dbReference type="NCBI Taxonomy" id="362663"/>
    <lineage>
        <taxon>Bacteria</taxon>
        <taxon>Pseudomonadati</taxon>
        <taxon>Pseudomonadota</taxon>
        <taxon>Gammaproteobacteria</taxon>
        <taxon>Enterobacterales</taxon>
        <taxon>Enterobacteriaceae</taxon>
        <taxon>Escherichia</taxon>
    </lineage>
</organism>
<reference key="1">
    <citation type="journal article" date="2006" name="Mol. Microbiol.">
        <title>Role of pathogenicity island-associated integrases in the genome plasticity of uropathogenic Escherichia coli strain 536.</title>
        <authorList>
            <person name="Hochhut B."/>
            <person name="Wilde C."/>
            <person name="Balling G."/>
            <person name="Middendorf B."/>
            <person name="Dobrindt U."/>
            <person name="Brzuszkiewicz E."/>
            <person name="Gottschalk G."/>
            <person name="Carniel E."/>
            <person name="Hacker J."/>
        </authorList>
    </citation>
    <scope>NUCLEOTIDE SEQUENCE [LARGE SCALE GENOMIC DNA]</scope>
    <source>
        <strain>536 / UPEC</strain>
    </source>
</reference>
<accession>Q0TLQ7</accession>
<protein>
    <recommendedName>
        <fullName evidence="1">Ribosomal RNA small subunit methyltransferase H</fullName>
        <ecNumber evidence="1">2.1.1.199</ecNumber>
    </recommendedName>
    <alternativeName>
        <fullName evidence="1">16S rRNA m(4)C1402 methyltransferase</fullName>
    </alternativeName>
    <alternativeName>
        <fullName evidence="1">rRNA (cytosine-N(4)-)-methyltransferase RsmH</fullName>
    </alternativeName>
</protein>
<keyword id="KW-0963">Cytoplasm</keyword>
<keyword id="KW-0489">Methyltransferase</keyword>
<keyword id="KW-0698">rRNA processing</keyword>
<keyword id="KW-0949">S-adenosyl-L-methionine</keyword>
<keyword id="KW-0808">Transferase</keyword>
<sequence length="313" mass="34878">MMENYKHTTVLLDEAVNGLNIRPDGIYIDGTFGRGGHSRLILSQLGEEGRLLAIDRDPQAIAVAKTIDDPRFSIIHGPFSALGEYVAERDLIGKIDGILLDLGVSSPQLDDAERGFSFMRDGPLDMRMDPTRGQSAAEWLQTAEEADIAWVLKTYGEERFAKRIARAIVERNREQPMTRTKELAEVVAAATPVKDKFKHPATRTFQAVRIWVNSELEEIEQALKSSLNVLAPGGRLSIISFHSLEDRIVKRFMRENSRGPQVPAGLPMTEEQLKKLGGRQLRALGKLMPGEEEVAENPRARSSVLRIAERTNA</sequence>
<gene>
    <name evidence="1" type="primary">rsmH</name>
    <name type="synonym">mraW</name>
    <name type="ordered locus">ECP_0084</name>
</gene>
<dbReference type="EC" id="2.1.1.199" evidence="1"/>
<dbReference type="EMBL" id="CP000247">
    <property type="protein sequence ID" value="ABG68124.1"/>
    <property type="molecule type" value="Genomic_DNA"/>
</dbReference>
<dbReference type="RefSeq" id="WP_000970479.1">
    <property type="nucleotide sequence ID" value="NC_008253.1"/>
</dbReference>
<dbReference type="SMR" id="Q0TLQ7"/>
<dbReference type="GeneID" id="86862592"/>
<dbReference type="KEGG" id="ecp:ECP_0084"/>
<dbReference type="HOGENOM" id="CLU_038422_2_0_6"/>
<dbReference type="Proteomes" id="UP000009182">
    <property type="component" value="Chromosome"/>
</dbReference>
<dbReference type="GO" id="GO:0005737">
    <property type="term" value="C:cytoplasm"/>
    <property type="evidence" value="ECO:0007669"/>
    <property type="project" value="UniProtKB-SubCell"/>
</dbReference>
<dbReference type="GO" id="GO:0071424">
    <property type="term" value="F:rRNA (cytosine-N4-)-methyltransferase activity"/>
    <property type="evidence" value="ECO:0007669"/>
    <property type="project" value="UniProtKB-UniRule"/>
</dbReference>
<dbReference type="GO" id="GO:0070475">
    <property type="term" value="P:rRNA base methylation"/>
    <property type="evidence" value="ECO:0007669"/>
    <property type="project" value="UniProtKB-UniRule"/>
</dbReference>
<dbReference type="FunFam" id="1.10.150.170:FF:000001">
    <property type="entry name" value="Ribosomal RNA small subunit methyltransferase H"/>
    <property type="match status" value="1"/>
</dbReference>
<dbReference type="Gene3D" id="1.10.150.170">
    <property type="entry name" value="Putative methyltransferase TM0872, insert domain"/>
    <property type="match status" value="1"/>
</dbReference>
<dbReference type="Gene3D" id="3.40.50.150">
    <property type="entry name" value="Vaccinia Virus protein VP39"/>
    <property type="match status" value="1"/>
</dbReference>
<dbReference type="HAMAP" id="MF_01007">
    <property type="entry name" value="16SrRNA_methyltr_H"/>
    <property type="match status" value="1"/>
</dbReference>
<dbReference type="InterPro" id="IPR002903">
    <property type="entry name" value="RsmH"/>
</dbReference>
<dbReference type="InterPro" id="IPR023397">
    <property type="entry name" value="SAM-dep_MeTrfase_MraW_recog"/>
</dbReference>
<dbReference type="InterPro" id="IPR029063">
    <property type="entry name" value="SAM-dependent_MTases_sf"/>
</dbReference>
<dbReference type="NCBIfam" id="TIGR00006">
    <property type="entry name" value="16S rRNA (cytosine(1402)-N(4))-methyltransferase RsmH"/>
    <property type="match status" value="1"/>
</dbReference>
<dbReference type="PANTHER" id="PTHR11265:SF0">
    <property type="entry name" value="12S RRNA N4-METHYLCYTIDINE METHYLTRANSFERASE"/>
    <property type="match status" value="1"/>
</dbReference>
<dbReference type="PANTHER" id="PTHR11265">
    <property type="entry name" value="S-ADENOSYL-METHYLTRANSFERASE MRAW"/>
    <property type="match status" value="1"/>
</dbReference>
<dbReference type="Pfam" id="PF01795">
    <property type="entry name" value="Methyltransf_5"/>
    <property type="match status" value="1"/>
</dbReference>
<dbReference type="PIRSF" id="PIRSF004486">
    <property type="entry name" value="MraW"/>
    <property type="match status" value="1"/>
</dbReference>
<dbReference type="SUPFAM" id="SSF81799">
    <property type="entry name" value="Putative methyltransferase TM0872, insert domain"/>
    <property type="match status" value="1"/>
</dbReference>
<dbReference type="SUPFAM" id="SSF53335">
    <property type="entry name" value="S-adenosyl-L-methionine-dependent methyltransferases"/>
    <property type="match status" value="1"/>
</dbReference>